<dbReference type="EMBL" id="X86563">
    <property type="protein sequence ID" value="CAA60347.1"/>
    <property type="molecule type" value="Genomic_DNA"/>
</dbReference>
<dbReference type="EMBL" id="X64099">
    <property type="protein sequence ID" value="CAA45467.1"/>
    <property type="molecule type" value="Genomic_DNA"/>
</dbReference>
<dbReference type="PIR" id="S31306">
    <property type="entry name" value="S31306"/>
</dbReference>
<dbReference type="RefSeq" id="NP_043085.1">
    <property type="nucleotide sequence ID" value="NC_001666.2"/>
</dbReference>
<dbReference type="SMR" id="Q05566"/>
<dbReference type="FunCoup" id="Q05566">
    <property type="interactions" value="524"/>
</dbReference>
<dbReference type="STRING" id="4577.Q05566"/>
<dbReference type="GeneID" id="845221"/>
<dbReference type="KEGG" id="zma:845221"/>
<dbReference type="MaizeGDB" id="67049"/>
<dbReference type="InParanoid" id="Q05566"/>
<dbReference type="OrthoDB" id="671523at2759"/>
<dbReference type="Proteomes" id="UP000007305">
    <property type="component" value="Chloroplast"/>
</dbReference>
<dbReference type="GO" id="GO:0009507">
    <property type="term" value="C:chloroplast"/>
    <property type="evidence" value="ECO:0007669"/>
    <property type="project" value="UniProtKB-SubCell"/>
</dbReference>
<dbReference type="GO" id="GO:0015934">
    <property type="term" value="C:large ribosomal subunit"/>
    <property type="evidence" value="ECO:0007669"/>
    <property type="project" value="InterPro"/>
</dbReference>
<dbReference type="GO" id="GO:0003735">
    <property type="term" value="F:structural constituent of ribosome"/>
    <property type="evidence" value="ECO:0007669"/>
    <property type="project" value="InterPro"/>
</dbReference>
<dbReference type="GO" id="GO:0006412">
    <property type="term" value="P:translation"/>
    <property type="evidence" value="ECO:0007669"/>
    <property type="project" value="UniProtKB-UniRule"/>
</dbReference>
<dbReference type="HAMAP" id="MF_00340">
    <property type="entry name" value="Ribosomal_bL32"/>
    <property type="match status" value="1"/>
</dbReference>
<dbReference type="InterPro" id="IPR002677">
    <property type="entry name" value="Ribosomal_bL32"/>
</dbReference>
<dbReference type="InterPro" id="IPR044958">
    <property type="entry name" value="Ribosomal_bL32_plant/cyanobact"/>
</dbReference>
<dbReference type="InterPro" id="IPR011332">
    <property type="entry name" value="Ribosomal_zn-bd"/>
</dbReference>
<dbReference type="PANTHER" id="PTHR36083">
    <property type="entry name" value="50S RIBOSOMAL PROTEIN L32, CHLOROPLASTIC"/>
    <property type="match status" value="1"/>
</dbReference>
<dbReference type="PANTHER" id="PTHR36083:SF1">
    <property type="entry name" value="LARGE RIBOSOMAL SUBUNIT PROTEIN BL32C"/>
    <property type="match status" value="1"/>
</dbReference>
<dbReference type="SUPFAM" id="SSF57829">
    <property type="entry name" value="Zn-binding ribosomal proteins"/>
    <property type="match status" value="1"/>
</dbReference>
<keyword id="KW-0150">Chloroplast</keyword>
<keyword id="KW-0934">Plastid</keyword>
<keyword id="KW-1185">Reference proteome</keyword>
<keyword id="KW-0687">Ribonucleoprotein</keyword>
<keyword id="KW-0689">Ribosomal protein</keyword>
<name>RK32_MAIZE</name>
<geneLocation type="chloroplast"/>
<sequence>MAVPKKRTSMSKKRIRKNLWKKKTYFSIVQSYSLAKSRSFSRGNEHPKPKGFSGQQANK</sequence>
<protein>
    <recommendedName>
        <fullName evidence="3">Large ribosomal subunit protein bL32c</fullName>
    </recommendedName>
    <alternativeName>
        <fullName>50S ribosomal protein L32, chloroplastic</fullName>
    </alternativeName>
</protein>
<feature type="initiator methionine" description="Removed" evidence="1">
    <location>
        <position position="1"/>
    </location>
</feature>
<feature type="chain" id="PRO_0000172463" description="Large ribosomal subunit protein bL32c">
    <location>
        <begin position="2"/>
        <end position="59"/>
    </location>
</feature>
<feature type="region of interest" description="Disordered" evidence="2">
    <location>
        <begin position="37"/>
        <end position="59"/>
    </location>
</feature>
<organism>
    <name type="scientific">Zea mays</name>
    <name type="common">Maize</name>
    <dbReference type="NCBI Taxonomy" id="4577"/>
    <lineage>
        <taxon>Eukaryota</taxon>
        <taxon>Viridiplantae</taxon>
        <taxon>Streptophyta</taxon>
        <taxon>Embryophyta</taxon>
        <taxon>Tracheophyta</taxon>
        <taxon>Spermatophyta</taxon>
        <taxon>Magnoliopsida</taxon>
        <taxon>Liliopsida</taxon>
        <taxon>Poales</taxon>
        <taxon>Poaceae</taxon>
        <taxon>PACMAD clade</taxon>
        <taxon>Panicoideae</taxon>
        <taxon>Andropogonodae</taxon>
        <taxon>Andropogoneae</taxon>
        <taxon>Tripsacinae</taxon>
        <taxon>Zea</taxon>
    </lineage>
</organism>
<gene>
    <name type="primary">rpl32</name>
</gene>
<evidence type="ECO:0000250" key="1"/>
<evidence type="ECO:0000256" key="2">
    <source>
        <dbReference type="SAM" id="MobiDB-lite"/>
    </source>
</evidence>
<evidence type="ECO:0000305" key="3"/>
<comment type="subcellular location">
    <subcellularLocation>
        <location>Plastid</location>
        <location>Chloroplast</location>
    </subcellularLocation>
</comment>
<comment type="similarity">
    <text evidence="3">Belongs to the bacterial ribosomal protein bL32 family.</text>
</comment>
<accession>Q05566</accession>
<proteinExistence type="inferred from homology"/>
<reference key="1">
    <citation type="journal article" date="1993" name="Plant Mol. Biol.">
        <title>Nucleotide sequence of maize chloroplast rpl32: completing the apparent set of plastid ribosomal protein genes and their tentative operon organization.</title>
        <authorList>
            <person name="Weglohner W."/>
            <person name="Subramanian A.R."/>
        </authorList>
    </citation>
    <scope>NUCLEOTIDE SEQUENCE [LARGE SCALE GENOMIC DNA]</scope>
    <source>
        <strain>cv. B73</strain>
    </source>
</reference>
<reference key="2">
    <citation type="journal article" date="1995" name="J. Mol. Biol.">
        <title>Complete sequence of the maize chloroplast genome: gene content, hotspots of divergence and fine tuning of genetic information by transcript editing.</title>
        <authorList>
            <person name="Maier R.M."/>
            <person name="Neckermann K."/>
            <person name="Igloi G.L."/>
            <person name="Koessel H."/>
        </authorList>
    </citation>
    <scope>NUCLEOTIDE SEQUENCE [LARGE SCALE GENOMIC DNA]</scope>
    <source>
        <strain>cv. B73</strain>
    </source>
</reference>